<name>RECF_STAAB</name>
<keyword id="KW-0067">ATP-binding</keyword>
<keyword id="KW-0963">Cytoplasm</keyword>
<keyword id="KW-0227">DNA damage</keyword>
<keyword id="KW-0234">DNA repair</keyword>
<keyword id="KW-0235">DNA replication</keyword>
<keyword id="KW-0238">DNA-binding</keyword>
<keyword id="KW-0547">Nucleotide-binding</keyword>
<keyword id="KW-0742">SOS response</keyword>
<dbReference type="EMBL" id="AJ938182">
    <property type="protein sequence ID" value="CAI79692.1"/>
    <property type="molecule type" value="Genomic_DNA"/>
</dbReference>
<dbReference type="RefSeq" id="WP_000774111.1">
    <property type="nucleotide sequence ID" value="NC_007622.1"/>
</dbReference>
<dbReference type="SMR" id="Q2YUN8"/>
<dbReference type="KEGG" id="sab:SAB0004"/>
<dbReference type="HOGENOM" id="CLU_040267_0_1_9"/>
<dbReference type="GO" id="GO:0005737">
    <property type="term" value="C:cytoplasm"/>
    <property type="evidence" value="ECO:0007669"/>
    <property type="project" value="UniProtKB-SubCell"/>
</dbReference>
<dbReference type="GO" id="GO:0005524">
    <property type="term" value="F:ATP binding"/>
    <property type="evidence" value="ECO:0007669"/>
    <property type="project" value="UniProtKB-UniRule"/>
</dbReference>
<dbReference type="GO" id="GO:0003697">
    <property type="term" value="F:single-stranded DNA binding"/>
    <property type="evidence" value="ECO:0007669"/>
    <property type="project" value="UniProtKB-UniRule"/>
</dbReference>
<dbReference type="GO" id="GO:0006260">
    <property type="term" value="P:DNA replication"/>
    <property type="evidence" value="ECO:0007669"/>
    <property type="project" value="UniProtKB-UniRule"/>
</dbReference>
<dbReference type="GO" id="GO:0000731">
    <property type="term" value="P:DNA synthesis involved in DNA repair"/>
    <property type="evidence" value="ECO:0007669"/>
    <property type="project" value="TreeGrafter"/>
</dbReference>
<dbReference type="GO" id="GO:0006302">
    <property type="term" value="P:double-strand break repair"/>
    <property type="evidence" value="ECO:0007669"/>
    <property type="project" value="TreeGrafter"/>
</dbReference>
<dbReference type="GO" id="GO:0009432">
    <property type="term" value="P:SOS response"/>
    <property type="evidence" value="ECO:0007669"/>
    <property type="project" value="UniProtKB-UniRule"/>
</dbReference>
<dbReference type="CDD" id="cd03242">
    <property type="entry name" value="ABC_RecF"/>
    <property type="match status" value="1"/>
</dbReference>
<dbReference type="FunFam" id="1.20.1050.90:FF:000002">
    <property type="entry name" value="DNA replication and repair protein RecF"/>
    <property type="match status" value="1"/>
</dbReference>
<dbReference type="Gene3D" id="3.40.50.300">
    <property type="entry name" value="P-loop containing nucleotide triphosphate hydrolases"/>
    <property type="match status" value="1"/>
</dbReference>
<dbReference type="Gene3D" id="1.20.1050.90">
    <property type="entry name" value="RecF/RecN/SMC, N-terminal domain"/>
    <property type="match status" value="1"/>
</dbReference>
<dbReference type="HAMAP" id="MF_00365">
    <property type="entry name" value="RecF"/>
    <property type="match status" value="1"/>
</dbReference>
<dbReference type="InterPro" id="IPR001238">
    <property type="entry name" value="DNA-binding_RecF"/>
</dbReference>
<dbReference type="InterPro" id="IPR018078">
    <property type="entry name" value="DNA-binding_RecF_CS"/>
</dbReference>
<dbReference type="InterPro" id="IPR027417">
    <property type="entry name" value="P-loop_NTPase"/>
</dbReference>
<dbReference type="InterPro" id="IPR003395">
    <property type="entry name" value="RecF/RecN/SMC_N"/>
</dbReference>
<dbReference type="InterPro" id="IPR042174">
    <property type="entry name" value="RecF_2"/>
</dbReference>
<dbReference type="NCBIfam" id="TIGR00611">
    <property type="entry name" value="recf"/>
    <property type="match status" value="1"/>
</dbReference>
<dbReference type="PANTHER" id="PTHR32182">
    <property type="entry name" value="DNA REPLICATION AND REPAIR PROTEIN RECF"/>
    <property type="match status" value="1"/>
</dbReference>
<dbReference type="PANTHER" id="PTHR32182:SF0">
    <property type="entry name" value="DNA REPLICATION AND REPAIR PROTEIN RECF"/>
    <property type="match status" value="1"/>
</dbReference>
<dbReference type="Pfam" id="PF02463">
    <property type="entry name" value="SMC_N"/>
    <property type="match status" value="1"/>
</dbReference>
<dbReference type="SUPFAM" id="SSF52540">
    <property type="entry name" value="P-loop containing nucleoside triphosphate hydrolases"/>
    <property type="match status" value="1"/>
</dbReference>
<dbReference type="PROSITE" id="PS00617">
    <property type="entry name" value="RECF_1"/>
    <property type="match status" value="1"/>
</dbReference>
<dbReference type="PROSITE" id="PS00618">
    <property type="entry name" value="RECF_2"/>
    <property type="match status" value="1"/>
</dbReference>
<comment type="function">
    <text evidence="1">The RecF protein is involved in DNA metabolism; it is required for DNA replication and normal SOS inducibility. RecF binds preferentially to single-stranded, linear DNA. It also seems to bind ATP.</text>
</comment>
<comment type="subcellular location">
    <subcellularLocation>
        <location evidence="1">Cytoplasm</location>
    </subcellularLocation>
</comment>
<comment type="similarity">
    <text evidence="1">Belongs to the RecF family.</text>
</comment>
<proteinExistence type="inferred from homology"/>
<evidence type="ECO:0000255" key="1">
    <source>
        <dbReference type="HAMAP-Rule" id="MF_00365"/>
    </source>
</evidence>
<reference key="1">
    <citation type="journal article" date="2007" name="PLoS ONE">
        <title>Molecular correlates of host specialization in Staphylococcus aureus.</title>
        <authorList>
            <person name="Herron-Olson L."/>
            <person name="Fitzgerald J.R."/>
            <person name="Musser J.M."/>
            <person name="Kapur V."/>
        </authorList>
    </citation>
    <scope>NUCLEOTIDE SEQUENCE [LARGE SCALE GENOMIC DNA]</scope>
    <source>
        <strain>bovine RF122 / ET3-1</strain>
    </source>
</reference>
<feature type="chain" id="PRO_0000236147" description="DNA replication and repair protein RecF">
    <location>
        <begin position="1"/>
        <end position="370"/>
    </location>
</feature>
<feature type="binding site" evidence="1">
    <location>
        <begin position="30"/>
        <end position="37"/>
    </location>
    <ligand>
        <name>ATP</name>
        <dbReference type="ChEBI" id="CHEBI:30616"/>
    </ligand>
</feature>
<accession>Q2YUN8</accession>
<organism>
    <name type="scientific">Staphylococcus aureus (strain bovine RF122 / ET3-1)</name>
    <dbReference type="NCBI Taxonomy" id="273036"/>
    <lineage>
        <taxon>Bacteria</taxon>
        <taxon>Bacillati</taxon>
        <taxon>Bacillota</taxon>
        <taxon>Bacilli</taxon>
        <taxon>Bacillales</taxon>
        <taxon>Staphylococcaceae</taxon>
        <taxon>Staphylococcus</taxon>
    </lineage>
</organism>
<protein>
    <recommendedName>
        <fullName evidence="1">DNA replication and repair protein RecF</fullName>
    </recommendedName>
</protein>
<sequence length="370" mass="42442">MKLNTLQLENYRNYDEVTLKCHPDVNILIGENAQGKTNLLESIYTLALAKSHRTSNDKELIRFNADYAKIEGELSYRHGTMPLTMFITKKGKQVKVNHLEQSRLTQYIGHLNVVLFAPEDLNIVKGSPQIRRRFIDMELGQISAVYLNDLAQYQRILKQKNNYLKQLQLGQKKDLTMLEVLNQQFAEYAMKVTDKRAHFIQELELLAKPIHAGITNDKEALSLNYLPSLKFDYAQNEAARLEEIMSILSDNMQREKERGISLFGPHRDDISFDVNGMDAQTYGSQGQQRTTALSIKLAEIELMNIEVGEYPILLLDDVLSELDDSRQTHLLSTIQHKVQTFVTTTSVDGIDHEIMNNAKLYRINQGEIIK</sequence>
<gene>
    <name evidence="1" type="primary">recF</name>
    <name type="ordered locus">SAB0004</name>
</gene>